<name>CPOB_PSEPK</name>
<accession>P0A130</accession>
<accession>P43037</accession>
<reference key="1">
    <citation type="journal article" date="2002" name="Environ. Microbiol.">
        <title>Complete genome sequence and comparative analysis of the metabolically versatile Pseudomonas putida KT2440.</title>
        <authorList>
            <person name="Nelson K.E."/>
            <person name="Weinel C."/>
            <person name="Paulsen I.T."/>
            <person name="Dodson R.J."/>
            <person name="Hilbert H."/>
            <person name="Martins dos Santos V.A.P."/>
            <person name="Fouts D.E."/>
            <person name="Gill S.R."/>
            <person name="Pop M."/>
            <person name="Holmes M."/>
            <person name="Brinkac L.M."/>
            <person name="Beanan M.J."/>
            <person name="DeBoy R.T."/>
            <person name="Daugherty S.C."/>
            <person name="Kolonay J.F."/>
            <person name="Madupu R."/>
            <person name="Nelson W.C."/>
            <person name="White O."/>
            <person name="Peterson J.D."/>
            <person name="Khouri H.M."/>
            <person name="Hance I."/>
            <person name="Chris Lee P."/>
            <person name="Holtzapple E.K."/>
            <person name="Scanlan D."/>
            <person name="Tran K."/>
            <person name="Moazzez A."/>
            <person name="Utterback T.R."/>
            <person name="Rizzo M."/>
            <person name="Lee K."/>
            <person name="Kosack D."/>
            <person name="Moestl D."/>
            <person name="Wedler H."/>
            <person name="Lauber J."/>
            <person name="Stjepandic D."/>
            <person name="Hoheisel J."/>
            <person name="Straetz M."/>
            <person name="Heim S."/>
            <person name="Kiewitz C."/>
            <person name="Eisen J.A."/>
            <person name="Timmis K.N."/>
            <person name="Duesterhoeft A."/>
            <person name="Tuemmler B."/>
            <person name="Fraser C.M."/>
        </authorList>
    </citation>
    <scope>NUCLEOTIDE SEQUENCE [LARGE SCALE GENOMIC DNA]</scope>
    <source>
        <strain>ATCC 47054 / DSM 6125 / CFBP 8728 / NCIMB 11950 / KT2440</strain>
    </source>
</reference>
<organism>
    <name type="scientific">Pseudomonas putida (strain ATCC 47054 / DSM 6125 / CFBP 8728 / NCIMB 11950 / KT2440)</name>
    <dbReference type="NCBI Taxonomy" id="160488"/>
    <lineage>
        <taxon>Bacteria</taxon>
        <taxon>Pseudomonadati</taxon>
        <taxon>Pseudomonadota</taxon>
        <taxon>Gammaproteobacteria</taxon>
        <taxon>Pseudomonadales</taxon>
        <taxon>Pseudomonadaceae</taxon>
        <taxon>Pseudomonas</taxon>
    </lineage>
</organism>
<gene>
    <name evidence="3" type="primary">cpoB</name>
    <name type="ordered locus">PP_1224</name>
</gene>
<evidence type="ECO:0000250" key="1">
    <source>
        <dbReference type="UniProtKB" id="P45955"/>
    </source>
</evidence>
<evidence type="ECO:0000255" key="2"/>
<evidence type="ECO:0000255" key="3">
    <source>
        <dbReference type="HAMAP-Rule" id="MF_02066"/>
    </source>
</evidence>
<evidence type="ECO:0000256" key="4">
    <source>
        <dbReference type="SAM" id="MobiDB-lite"/>
    </source>
</evidence>
<protein>
    <recommendedName>
        <fullName evidence="3">Cell division coordinator CpoB</fullName>
    </recommendedName>
</protein>
<feature type="signal peptide" evidence="2">
    <location>
        <begin position="1"/>
        <end position="21"/>
    </location>
</feature>
<feature type="chain" id="PRO_0000013805" description="Cell division coordinator CpoB">
    <location>
        <begin position="22"/>
        <end position="268"/>
    </location>
</feature>
<feature type="repeat" description="TPR 1" evidence="1">
    <location>
        <begin position="149"/>
        <end position="181"/>
    </location>
</feature>
<feature type="repeat" description="TPR 2" evidence="1">
    <location>
        <begin position="185"/>
        <end position="218"/>
    </location>
</feature>
<feature type="repeat" description="TPR 3" evidence="1">
    <location>
        <begin position="222"/>
        <end position="255"/>
    </location>
</feature>
<feature type="region of interest" description="Disordered" evidence="4">
    <location>
        <begin position="104"/>
        <end position="146"/>
    </location>
</feature>
<feature type="coiled-coil region" evidence="3">
    <location>
        <begin position="58"/>
        <end position="94"/>
    </location>
</feature>
<feature type="compositionally biased region" description="Low complexity" evidence="4">
    <location>
        <begin position="121"/>
        <end position="143"/>
    </location>
</feature>
<proteinExistence type="inferred from homology"/>
<dbReference type="EMBL" id="AE015451">
    <property type="protein sequence ID" value="AAN66848.1"/>
    <property type="molecule type" value="Genomic_DNA"/>
</dbReference>
<dbReference type="RefSeq" id="NP_743384.1">
    <property type="nucleotide sequence ID" value="NC_002947.4"/>
</dbReference>
<dbReference type="SMR" id="P0A130"/>
<dbReference type="STRING" id="160488.PP_1224"/>
<dbReference type="PaxDb" id="160488-PP_1224"/>
<dbReference type="KEGG" id="ppu:PP_1224"/>
<dbReference type="PATRIC" id="fig|160488.4.peg.1300"/>
<dbReference type="eggNOG" id="COG1729">
    <property type="taxonomic scope" value="Bacteria"/>
</dbReference>
<dbReference type="HOGENOM" id="CLU_044315_2_2_6"/>
<dbReference type="OrthoDB" id="9768142at2"/>
<dbReference type="PhylomeDB" id="P0A130"/>
<dbReference type="BioCyc" id="PPUT160488:G1G01-1309-MONOMER"/>
<dbReference type="Proteomes" id="UP000000556">
    <property type="component" value="Chromosome"/>
</dbReference>
<dbReference type="GO" id="GO:0030288">
    <property type="term" value="C:outer membrane-bounded periplasmic space"/>
    <property type="evidence" value="ECO:0007669"/>
    <property type="project" value="UniProtKB-UniRule"/>
</dbReference>
<dbReference type="GO" id="GO:0043093">
    <property type="term" value="P:FtsZ-dependent cytokinesis"/>
    <property type="evidence" value="ECO:0007669"/>
    <property type="project" value="UniProtKB-UniRule"/>
</dbReference>
<dbReference type="GO" id="GO:0070206">
    <property type="term" value="P:protein trimerization"/>
    <property type="evidence" value="ECO:0007669"/>
    <property type="project" value="InterPro"/>
</dbReference>
<dbReference type="Gene3D" id="1.20.5.110">
    <property type="match status" value="1"/>
</dbReference>
<dbReference type="Gene3D" id="1.25.40.10">
    <property type="entry name" value="Tetratricopeptide repeat domain"/>
    <property type="match status" value="1"/>
</dbReference>
<dbReference type="HAMAP" id="MF_02066">
    <property type="entry name" value="CpoB"/>
    <property type="match status" value="1"/>
</dbReference>
<dbReference type="InterPro" id="IPR034706">
    <property type="entry name" value="CpoB"/>
</dbReference>
<dbReference type="InterPro" id="IPR014162">
    <property type="entry name" value="CpoB_C"/>
</dbReference>
<dbReference type="InterPro" id="IPR018704">
    <property type="entry name" value="SecYEG/CpoB_TPR"/>
</dbReference>
<dbReference type="InterPro" id="IPR011990">
    <property type="entry name" value="TPR-like_helical_dom_sf"/>
</dbReference>
<dbReference type="InterPro" id="IPR032519">
    <property type="entry name" value="YbgF_tri"/>
</dbReference>
<dbReference type="NCBIfam" id="TIGR02795">
    <property type="entry name" value="tol_pal_ybgF"/>
    <property type="match status" value="1"/>
</dbReference>
<dbReference type="Pfam" id="PF16331">
    <property type="entry name" value="TolA_bind_tri"/>
    <property type="match status" value="1"/>
</dbReference>
<dbReference type="Pfam" id="PF09976">
    <property type="entry name" value="TPR_21"/>
    <property type="match status" value="1"/>
</dbReference>
<dbReference type="SUPFAM" id="SSF48452">
    <property type="entry name" value="TPR-like"/>
    <property type="match status" value="1"/>
</dbReference>
<dbReference type="PROSITE" id="PS50293">
    <property type="entry name" value="TPR_REGION"/>
    <property type="match status" value="1"/>
</dbReference>
<keyword id="KW-0131">Cell cycle</keyword>
<keyword id="KW-0132">Cell division</keyword>
<keyword id="KW-0175">Coiled coil</keyword>
<keyword id="KW-0574">Periplasm</keyword>
<keyword id="KW-1185">Reference proteome</keyword>
<keyword id="KW-0677">Repeat</keyword>
<keyword id="KW-0732">Signal</keyword>
<keyword id="KW-0802">TPR repeat</keyword>
<sequence>MRMCRRVVTVLALSLPLAAWAEVPVVDDNAGSYPPAGYGTSGAYAGSGASAPASAQGQLFMQLQQMQDQLSRQQGIIEELQNDVSRMKQENLERYQDLDRRINSGAAPAATPDNSSGGGASNAAPDAAAGAAAQQPAGSSQPGDPAKEKLYYDAAFDLIKQKDFDKASQAFNAFLRKYPNSQYAGNAQYWLGEVNLAKGDLQGASQAFAQVSQKYPKHSKVPDSLYKLADVERRMGHTDKVKGILQQVVTQYPGTSAAQLAQRDLQKL</sequence>
<comment type="function">
    <text evidence="3">Mediates coordination of peptidoglycan synthesis and outer membrane constriction during cell division.</text>
</comment>
<comment type="subcellular location">
    <subcellularLocation>
        <location evidence="3">Periplasm</location>
    </subcellularLocation>
</comment>
<comment type="domain">
    <text evidence="1">Contains an N-terminal coiled-coil domain and a C-terminal TPR domain, separated by a flexible linker.</text>
</comment>
<comment type="similarity">
    <text evidence="3">Belongs to the CpoB family.</text>
</comment>